<keyword id="KW-0021">Allosteric enzyme</keyword>
<keyword id="KW-0963">Cytoplasm</keyword>
<keyword id="KW-0378">Hydrolase</keyword>
<keyword id="KW-0479">Metal-binding</keyword>
<keyword id="KW-0645">Protease</keyword>
<keyword id="KW-1185">Reference proteome</keyword>
<keyword id="KW-0915">Sodium</keyword>
<keyword id="KW-0888">Threonine protease</keyword>
<evidence type="ECO:0000255" key="1">
    <source>
        <dbReference type="HAMAP-Rule" id="MF_00248"/>
    </source>
</evidence>
<feature type="chain" id="PRO_1000125418" description="ATP-dependent protease subunit HslV">
    <location>
        <begin position="1"/>
        <end position="179"/>
    </location>
</feature>
<feature type="active site" evidence="1">
    <location>
        <position position="8"/>
    </location>
</feature>
<feature type="binding site" evidence="1">
    <location>
        <position position="164"/>
    </location>
    <ligand>
        <name>Na(+)</name>
        <dbReference type="ChEBI" id="CHEBI:29101"/>
    </ligand>
</feature>
<feature type="binding site" evidence="1">
    <location>
        <position position="167"/>
    </location>
    <ligand>
        <name>Na(+)</name>
        <dbReference type="ChEBI" id="CHEBI:29101"/>
    </ligand>
</feature>
<feature type="binding site" evidence="1">
    <location>
        <position position="170"/>
    </location>
    <ligand>
        <name>Na(+)</name>
        <dbReference type="ChEBI" id="CHEBI:29101"/>
    </ligand>
</feature>
<name>HSLV_STACT</name>
<proteinExistence type="inferred from homology"/>
<comment type="function">
    <text evidence="1">Protease subunit of a proteasome-like degradation complex believed to be a general protein degrading machinery.</text>
</comment>
<comment type="catalytic activity">
    <reaction evidence="1">
        <text>ATP-dependent cleavage of peptide bonds with broad specificity.</text>
        <dbReference type="EC" id="3.4.25.2"/>
    </reaction>
</comment>
<comment type="activity regulation">
    <text evidence="1">Allosterically activated by HslU binding.</text>
</comment>
<comment type="subunit">
    <text evidence="1">A double ring-shaped homohexamer of HslV is capped on each side by a ring-shaped HslU homohexamer. The assembly of the HslU/HslV complex is dependent on binding of ATP.</text>
</comment>
<comment type="subcellular location">
    <subcellularLocation>
        <location evidence="1">Cytoplasm</location>
    </subcellularLocation>
</comment>
<comment type="similarity">
    <text evidence="1">Belongs to the peptidase T1B family. HslV subfamily.</text>
</comment>
<organism>
    <name type="scientific">Staphylococcus carnosus (strain TM300)</name>
    <dbReference type="NCBI Taxonomy" id="396513"/>
    <lineage>
        <taxon>Bacteria</taxon>
        <taxon>Bacillati</taxon>
        <taxon>Bacillota</taxon>
        <taxon>Bacilli</taxon>
        <taxon>Bacillales</taxon>
        <taxon>Staphylococcaceae</taxon>
        <taxon>Staphylococcus</taxon>
    </lineage>
</organism>
<protein>
    <recommendedName>
        <fullName evidence="1">ATP-dependent protease subunit HslV</fullName>
        <ecNumber evidence="1">3.4.25.2</ecNumber>
    </recommendedName>
</protein>
<gene>
    <name evidence="1" type="primary">hslV</name>
    <name type="ordered locus">Sca_0887</name>
</gene>
<dbReference type="EC" id="3.4.25.2" evidence="1"/>
<dbReference type="EMBL" id="AM295250">
    <property type="protein sequence ID" value="CAL27797.1"/>
    <property type="molecule type" value="Genomic_DNA"/>
</dbReference>
<dbReference type="SMR" id="B9DPG5"/>
<dbReference type="MEROPS" id="T01.007"/>
<dbReference type="KEGG" id="sca:SCA_0887"/>
<dbReference type="eggNOG" id="COG5405">
    <property type="taxonomic scope" value="Bacteria"/>
</dbReference>
<dbReference type="HOGENOM" id="CLU_093872_1_1_9"/>
<dbReference type="OrthoDB" id="9804884at2"/>
<dbReference type="BioCyc" id="SCAR396513:SCA_RS04480-MONOMER"/>
<dbReference type="Proteomes" id="UP000000444">
    <property type="component" value="Chromosome"/>
</dbReference>
<dbReference type="GO" id="GO:0009376">
    <property type="term" value="C:HslUV protease complex"/>
    <property type="evidence" value="ECO:0007669"/>
    <property type="project" value="UniProtKB-UniRule"/>
</dbReference>
<dbReference type="GO" id="GO:0005839">
    <property type="term" value="C:proteasome core complex"/>
    <property type="evidence" value="ECO:0007669"/>
    <property type="project" value="InterPro"/>
</dbReference>
<dbReference type="GO" id="GO:0046872">
    <property type="term" value="F:metal ion binding"/>
    <property type="evidence" value="ECO:0007669"/>
    <property type="project" value="UniProtKB-KW"/>
</dbReference>
<dbReference type="GO" id="GO:0004298">
    <property type="term" value="F:threonine-type endopeptidase activity"/>
    <property type="evidence" value="ECO:0007669"/>
    <property type="project" value="UniProtKB-KW"/>
</dbReference>
<dbReference type="GO" id="GO:0051603">
    <property type="term" value="P:proteolysis involved in protein catabolic process"/>
    <property type="evidence" value="ECO:0007669"/>
    <property type="project" value="InterPro"/>
</dbReference>
<dbReference type="CDD" id="cd01913">
    <property type="entry name" value="protease_HslV"/>
    <property type="match status" value="1"/>
</dbReference>
<dbReference type="FunFam" id="3.60.20.10:FF:000002">
    <property type="entry name" value="ATP-dependent protease subunit HslV"/>
    <property type="match status" value="1"/>
</dbReference>
<dbReference type="Gene3D" id="3.60.20.10">
    <property type="entry name" value="Glutamine Phosphoribosylpyrophosphate, subunit 1, domain 1"/>
    <property type="match status" value="1"/>
</dbReference>
<dbReference type="HAMAP" id="MF_00248">
    <property type="entry name" value="HslV"/>
    <property type="match status" value="1"/>
</dbReference>
<dbReference type="InterPro" id="IPR022281">
    <property type="entry name" value="ATP-dep_Prtase_HsIV_su"/>
</dbReference>
<dbReference type="InterPro" id="IPR029055">
    <property type="entry name" value="Ntn_hydrolases_N"/>
</dbReference>
<dbReference type="InterPro" id="IPR001353">
    <property type="entry name" value="Proteasome_sua/b"/>
</dbReference>
<dbReference type="InterPro" id="IPR023333">
    <property type="entry name" value="Proteasome_suB-type"/>
</dbReference>
<dbReference type="NCBIfam" id="TIGR03692">
    <property type="entry name" value="ATP_dep_HslV"/>
    <property type="match status" value="1"/>
</dbReference>
<dbReference type="NCBIfam" id="NF003964">
    <property type="entry name" value="PRK05456.1"/>
    <property type="match status" value="1"/>
</dbReference>
<dbReference type="PANTHER" id="PTHR32194:SF0">
    <property type="entry name" value="ATP-DEPENDENT PROTEASE SUBUNIT HSLV"/>
    <property type="match status" value="1"/>
</dbReference>
<dbReference type="PANTHER" id="PTHR32194">
    <property type="entry name" value="METALLOPROTEASE TLDD"/>
    <property type="match status" value="1"/>
</dbReference>
<dbReference type="Pfam" id="PF00227">
    <property type="entry name" value="Proteasome"/>
    <property type="match status" value="1"/>
</dbReference>
<dbReference type="PIRSF" id="PIRSF039093">
    <property type="entry name" value="HslV"/>
    <property type="match status" value="1"/>
</dbReference>
<dbReference type="SUPFAM" id="SSF56235">
    <property type="entry name" value="N-terminal nucleophile aminohydrolases (Ntn hydrolases)"/>
    <property type="match status" value="1"/>
</dbReference>
<dbReference type="PROSITE" id="PS51476">
    <property type="entry name" value="PROTEASOME_BETA_2"/>
    <property type="match status" value="1"/>
</dbReference>
<accession>B9DPG5</accession>
<reference key="1">
    <citation type="journal article" date="2009" name="Appl. Environ. Microbiol.">
        <title>Genome analysis of the meat starter culture bacterium Staphylococcus carnosus TM300.</title>
        <authorList>
            <person name="Rosenstein R."/>
            <person name="Nerz C."/>
            <person name="Biswas L."/>
            <person name="Resch A."/>
            <person name="Raddatz G."/>
            <person name="Schuster S.C."/>
            <person name="Goetz F."/>
        </authorList>
    </citation>
    <scope>NUCLEOTIDE SEQUENCE [LARGE SCALE GENOMIC DNA]</scope>
    <source>
        <strain>TM300</strain>
    </source>
</reference>
<sequence length="179" mass="19435">MNNSIHATTIFAIRQNGHAAMAGDGQVTLGEQVIMKQTARKVRRLYDGKVLAGFAGSVADAFTLFEKFETKLQEFSGNLERAAVELAQEWRGDKQLRQLEAMLIVMDKNSILVVSGTGEVISPDDDLIAIGSGGNYALSAGRALKRHTEMSAKDIAYASLKVASEICVFTNDNIIVEEL</sequence>